<name>Y1964_YERPG</name>
<reference key="1">
    <citation type="journal article" date="2010" name="J. Bacteriol.">
        <title>Genome sequence of the deep-rooted Yersinia pestis strain Angola reveals new insights into the evolution and pangenome of the plague bacterium.</title>
        <authorList>
            <person name="Eppinger M."/>
            <person name="Worsham P.L."/>
            <person name="Nikolich M.P."/>
            <person name="Riley D.R."/>
            <person name="Sebastian Y."/>
            <person name="Mou S."/>
            <person name="Achtman M."/>
            <person name="Lindler L.E."/>
            <person name="Ravel J."/>
        </authorList>
    </citation>
    <scope>NUCLEOTIDE SEQUENCE [LARGE SCALE GENOMIC DNA]</scope>
    <source>
        <strain>Angola</strain>
    </source>
</reference>
<proteinExistence type="inferred from homology"/>
<comment type="similarity">
    <text evidence="1">Belongs to the UPF0434 family.</text>
</comment>
<feature type="chain" id="PRO_1000138340" description="UPF0434 protein YpAngola_A1964">
    <location>
        <begin position="1"/>
        <end position="60"/>
    </location>
</feature>
<gene>
    <name type="ordered locus">YpAngola_A1964</name>
</gene>
<dbReference type="EMBL" id="CP000901">
    <property type="protein sequence ID" value="ABX86215.1"/>
    <property type="molecule type" value="Genomic_DNA"/>
</dbReference>
<dbReference type="RefSeq" id="WP_002211315.1">
    <property type="nucleotide sequence ID" value="NZ_CP009935.1"/>
</dbReference>
<dbReference type="SMR" id="A9R7J2"/>
<dbReference type="KEGG" id="ypg:YpAngola_A1964"/>
<dbReference type="PATRIC" id="fig|349746.12.peg.2940"/>
<dbReference type="GO" id="GO:0005829">
    <property type="term" value="C:cytosol"/>
    <property type="evidence" value="ECO:0007669"/>
    <property type="project" value="TreeGrafter"/>
</dbReference>
<dbReference type="FunFam" id="2.20.25.10:FF:000002">
    <property type="entry name" value="UPF0434 protein YcaR"/>
    <property type="match status" value="1"/>
</dbReference>
<dbReference type="Gene3D" id="2.20.25.10">
    <property type="match status" value="1"/>
</dbReference>
<dbReference type="HAMAP" id="MF_01187">
    <property type="entry name" value="UPF0434"/>
    <property type="match status" value="1"/>
</dbReference>
<dbReference type="InterPro" id="IPR005651">
    <property type="entry name" value="Trm112-like"/>
</dbReference>
<dbReference type="PANTHER" id="PTHR33505:SF4">
    <property type="entry name" value="PROTEIN PREY, MITOCHONDRIAL"/>
    <property type="match status" value="1"/>
</dbReference>
<dbReference type="PANTHER" id="PTHR33505">
    <property type="entry name" value="ZGC:162634"/>
    <property type="match status" value="1"/>
</dbReference>
<dbReference type="Pfam" id="PF03966">
    <property type="entry name" value="Trm112p"/>
    <property type="match status" value="1"/>
</dbReference>
<dbReference type="SUPFAM" id="SSF158997">
    <property type="entry name" value="Trm112p-like"/>
    <property type="match status" value="1"/>
</dbReference>
<accession>A9R7J2</accession>
<evidence type="ECO:0000255" key="1">
    <source>
        <dbReference type="HAMAP-Rule" id="MF_01187"/>
    </source>
</evidence>
<sequence length="60" mass="6820">MDHRLLEIVACPVCNGKLYFNKENLELVCKVDNLAYPVRDGIPVLLENEARPLSIDEKHA</sequence>
<organism>
    <name type="scientific">Yersinia pestis bv. Antiqua (strain Angola)</name>
    <dbReference type="NCBI Taxonomy" id="349746"/>
    <lineage>
        <taxon>Bacteria</taxon>
        <taxon>Pseudomonadati</taxon>
        <taxon>Pseudomonadota</taxon>
        <taxon>Gammaproteobacteria</taxon>
        <taxon>Enterobacterales</taxon>
        <taxon>Yersiniaceae</taxon>
        <taxon>Yersinia</taxon>
    </lineage>
</organism>
<protein>
    <recommendedName>
        <fullName evidence="1">UPF0434 protein YpAngola_A1964</fullName>
    </recommendedName>
</protein>